<evidence type="ECO:0000255" key="1">
    <source>
        <dbReference type="HAMAP-Rule" id="MF_00385"/>
    </source>
</evidence>
<evidence type="ECO:0000256" key="2">
    <source>
        <dbReference type="SAM" id="MobiDB-lite"/>
    </source>
</evidence>
<evidence type="ECO:0000305" key="3"/>
<sequence length="124" mass="13911">MSLRIRLARGGAKKRPFYRIVVADSRSPRDGRFIEKLGTFDPMLPRDHERRVVLKDERVKYWLGVGALPSDRVARFLGLSGLTEARKVPEQTKQAQPKAKAQERLREAEEKARAAAEAAASAEG</sequence>
<dbReference type="EMBL" id="CP000230">
    <property type="protein sequence ID" value="ABC21986.1"/>
    <property type="molecule type" value="Genomic_DNA"/>
</dbReference>
<dbReference type="RefSeq" id="WP_011388940.1">
    <property type="nucleotide sequence ID" value="NC_007643.1"/>
</dbReference>
<dbReference type="RefSeq" id="YP_426273.1">
    <property type="nucleotide sequence ID" value="NC_007643.1"/>
</dbReference>
<dbReference type="SMR" id="Q2RV59"/>
<dbReference type="STRING" id="269796.Rru_A1185"/>
<dbReference type="EnsemblBacteria" id="ABC21986">
    <property type="protein sequence ID" value="ABC21986"/>
    <property type="gene ID" value="Rru_A1185"/>
</dbReference>
<dbReference type="KEGG" id="rru:Rru_A1185"/>
<dbReference type="PATRIC" id="fig|269796.9.peg.1249"/>
<dbReference type="eggNOG" id="COG0228">
    <property type="taxonomic scope" value="Bacteria"/>
</dbReference>
<dbReference type="HOGENOM" id="CLU_100590_3_0_5"/>
<dbReference type="PhylomeDB" id="Q2RV59"/>
<dbReference type="Proteomes" id="UP000001929">
    <property type="component" value="Chromosome"/>
</dbReference>
<dbReference type="GO" id="GO:0005737">
    <property type="term" value="C:cytoplasm"/>
    <property type="evidence" value="ECO:0007669"/>
    <property type="project" value="UniProtKB-ARBA"/>
</dbReference>
<dbReference type="GO" id="GO:0015935">
    <property type="term" value="C:small ribosomal subunit"/>
    <property type="evidence" value="ECO:0007669"/>
    <property type="project" value="TreeGrafter"/>
</dbReference>
<dbReference type="GO" id="GO:0003735">
    <property type="term" value="F:structural constituent of ribosome"/>
    <property type="evidence" value="ECO:0007669"/>
    <property type="project" value="InterPro"/>
</dbReference>
<dbReference type="GO" id="GO:0006412">
    <property type="term" value="P:translation"/>
    <property type="evidence" value="ECO:0007669"/>
    <property type="project" value="UniProtKB-UniRule"/>
</dbReference>
<dbReference type="Gene3D" id="3.30.1320.10">
    <property type="match status" value="1"/>
</dbReference>
<dbReference type="HAMAP" id="MF_00385">
    <property type="entry name" value="Ribosomal_bS16"/>
    <property type="match status" value="1"/>
</dbReference>
<dbReference type="InterPro" id="IPR000307">
    <property type="entry name" value="Ribosomal_bS16"/>
</dbReference>
<dbReference type="InterPro" id="IPR020592">
    <property type="entry name" value="Ribosomal_bS16_CS"/>
</dbReference>
<dbReference type="InterPro" id="IPR023803">
    <property type="entry name" value="Ribosomal_bS16_dom_sf"/>
</dbReference>
<dbReference type="NCBIfam" id="TIGR00002">
    <property type="entry name" value="S16"/>
    <property type="match status" value="1"/>
</dbReference>
<dbReference type="PANTHER" id="PTHR12919">
    <property type="entry name" value="30S RIBOSOMAL PROTEIN S16"/>
    <property type="match status" value="1"/>
</dbReference>
<dbReference type="PANTHER" id="PTHR12919:SF20">
    <property type="entry name" value="SMALL RIBOSOMAL SUBUNIT PROTEIN BS16M"/>
    <property type="match status" value="1"/>
</dbReference>
<dbReference type="Pfam" id="PF00886">
    <property type="entry name" value="Ribosomal_S16"/>
    <property type="match status" value="1"/>
</dbReference>
<dbReference type="SUPFAM" id="SSF54565">
    <property type="entry name" value="Ribosomal protein S16"/>
    <property type="match status" value="1"/>
</dbReference>
<dbReference type="PROSITE" id="PS00732">
    <property type="entry name" value="RIBOSOMAL_S16"/>
    <property type="match status" value="1"/>
</dbReference>
<gene>
    <name evidence="1" type="primary">rpsP</name>
    <name type="ordered locus">Rru_A1185</name>
</gene>
<accession>Q2RV59</accession>
<keyword id="KW-1185">Reference proteome</keyword>
<keyword id="KW-0687">Ribonucleoprotein</keyword>
<keyword id="KW-0689">Ribosomal protein</keyword>
<name>RS16_RHORT</name>
<comment type="similarity">
    <text evidence="1">Belongs to the bacterial ribosomal protein bS16 family.</text>
</comment>
<organism>
    <name type="scientific">Rhodospirillum rubrum (strain ATCC 11170 / ATH 1.1.1 / DSM 467 / LMG 4362 / NCIMB 8255 / S1)</name>
    <dbReference type="NCBI Taxonomy" id="269796"/>
    <lineage>
        <taxon>Bacteria</taxon>
        <taxon>Pseudomonadati</taxon>
        <taxon>Pseudomonadota</taxon>
        <taxon>Alphaproteobacteria</taxon>
        <taxon>Rhodospirillales</taxon>
        <taxon>Rhodospirillaceae</taxon>
        <taxon>Rhodospirillum</taxon>
    </lineage>
</organism>
<proteinExistence type="inferred from homology"/>
<reference key="1">
    <citation type="journal article" date="2011" name="Stand. Genomic Sci.">
        <title>Complete genome sequence of Rhodospirillum rubrum type strain (S1).</title>
        <authorList>
            <person name="Munk A.C."/>
            <person name="Copeland A."/>
            <person name="Lucas S."/>
            <person name="Lapidus A."/>
            <person name="Del Rio T.G."/>
            <person name="Barry K."/>
            <person name="Detter J.C."/>
            <person name="Hammon N."/>
            <person name="Israni S."/>
            <person name="Pitluck S."/>
            <person name="Brettin T."/>
            <person name="Bruce D."/>
            <person name="Han C."/>
            <person name="Tapia R."/>
            <person name="Gilna P."/>
            <person name="Schmutz J."/>
            <person name="Larimer F."/>
            <person name="Land M."/>
            <person name="Kyrpides N.C."/>
            <person name="Mavromatis K."/>
            <person name="Richardson P."/>
            <person name="Rohde M."/>
            <person name="Goeker M."/>
            <person name="Klenk H.P."/>
            <person name="Zhang Y."/>
            <person name="Roberts G.P."/>
            <person name="Reslewic S."/>
            <person name="Schwartz D.C."/>
        </authorList>
    </citation>
    <scope>NUCLEOTIDE SEQUENCE [LARGE SCALE GENOMIC DNA]</scope>
    <source>
        <strain>ATCC 11170 / ATH 1.1.1 / DSM 467 / LMG 4362 / NCIMB 8255 / S1</strain>
    </source>
</reference>
<protein>
    <recommendedName>
        <fullName evidence="1">Small ribosomal subunit protein bS16</fullName>
    </recommendedName>
    <alternativeName>
        <fullName evidence="3">30S ribosomal protein S16</fullName>
    </alternativeName>
</protein>
<feature type="chain" id="PRO_0000243861" description="Small ribosomal subunit protein bS16">
    <location>
        <begin position="1"/>
        <end position="124"/>
    </location>
</feature>
<feature type="region of interest" description="Disordered" evidence="2">
    <location>
        <begin position="88"/>
        <end position="124"/>
    </location>
</feature>
<feature type="compositionally biased region" description="Basic and acidic residues" evidence="2">
    <location>
        <begin position="100"/>
        <end position="114"/>
    </location>
</feature>
<feature type="compositionally biased region" description="Low complexity" evidence="2">
    <location>
        <begin position="115"/>
        <end position="124"/>
    </location>
</feature>